<dbReference type="EMBL" id="AE000511">
    <property type="protein sequence ID" value="AAD07582.1"/>
    <property type="status" value="ALT_INIT"/>
    <property type="molecule type" value="Genomic_DNA"/>
</dbReference>
<dbReference type="PIR" id="B64584">
    <property type="entry name" value="B64584"/>
</dbReference>
<dbReference type="RefSeq" id="NP_207311.1">
    <property type="nucleotide sequence ID" value="NC_000915.1"/>
</dbReference>
<dbReference type="RefSeq" id="WP_001862443.1">
    <property type="nucleotide sequence ID" value="NC_018939.1"/>
</dbReference>
<dbReference type="SMR" id="P56035"/>
<dbReference type="DIP" id="DIP-3673N"/>
<dbReference type="FunCoup" id="P56035">
    <property type="interactions" value="469"/>
</dbReference>
<dbReference type="IntAct" id="P56035">
    <property type="interactions" value="4"/>
</dbReference>
<dbReference type="MINT" id="P56035"/>
<dbReference type="STRING" id="85962.HP_0514"/>
<dbReference type="PaxDb" id="85962-C694_02645"/>
<dbReference type="EnsemblBacteria" id="AAD07582">
    <property type="protein sequence ID" value="AAD07582"/>
    <property type="gene ID" value="HP_0514"/>
</dbReference>
<dbReference type="KEGG" id="heo:C694_02645"/>
<dbReference type="KEGG" id="hpy:HP_0514"/>
<dbReference type="PATRIC" id="fig|85962.47.peg.553"/>
<dbReference type="eggNOG" id="COG0359">
    <property type="taxonomic scope" value="Bacteria"/>
</dbReference>
<dbReference type="InParanoid" id="P56035"/>
<dbReference type="OrthoDB" id="9788336at2"/>
<dbReference type="PhylomeDB" id="P56035"/>
<dbReference type="Proteomes" id="UP000000429">
    <property type="component" value="Chromosome"/>
</dbReference>
<dbReference type="GO" id="GO:0022625">
    <property type="term" value="C:cytosolic large ribosomal subunit"/>
    <property type="evidence" value="ECO:0000318"/>
    <property type="project" value="GO_Central"/>
</dbReference>
<dbReference type="GO" id="GO:0019843">
    <property type="term" value="F:rRNA binding"/>
    <property type="evidence" value="ECO:0007669"/>
    <property type="project" value="UniProtKB-UniRule"/>
</dbReference>
<dbReference type="GO" id="GO:0003735">
    <property type="term" value="F:structural constituent of ribosome"/>
    <property type="evidence" value="ECO:0007669"/>
    <property type="project" value="InterPro"/>
</dbReference>
<dbReference type="GO" id="GO:0006412">
    <property type="term" value="P:translation"/>
    <property type="evidence" value="ECO:0007669"/>
    <property type="project" value="UniProtKB-UniRule"/>
</dbReference>
<dbReference type="FunFam" id="3.10.430.100:FF:000003">
    <property type="entry name" value="50S ribosomal protein L9"/>
    <property type="match status" value="1"/>
</dbReference>
<dbReference type="FunFam" id="3.40.5.10:FF:000002">
    <property type="entry name" value="50S ribosomal protein L9"/>
    <property type="match status" value="1"/>
</dbReference>
<dbReference type="Gene3D" id="3.10.430.100">
    <property type="entry name" value="Ribosomal protein L9, C-terminal domain"/>
    <property type="match status" value="1"/>
</dbReference>
<dbReference type="Gene3D" id="3.40.5.10">
    <property type="entry name" value="Ribosomal protein L9, N-terminal domain"/>
    <property type="match status" value="1"/>
</dbReference>
<dbReference type="HAMAP" id="MF_00503">
    <property type="entry name" value="Ribosomal_bL9"/>
    <property type="match status" value="1"/>
</dbReference>
<dbReference type="InterPro" id="IPR000244">
    <property type="entry name" value="Ribosomal_bL9"/>
</dbReference>
<dbReference type="InterPro" id="IPR009027">
    <property type="entry name" value="Ribosomal_bL9/RNase_H1_N"/>
</dbReference>
<dbReference type="InterPro" id="IPR020594">
    <property type="entry name" value="Ribosomal_bL9_bac/chp"/>
</dbReference>
<dbReference type="InterPro" id="IPR020069">
    <property type="entry name" value="Ribosomal_bL9_C"/>
</dbReference>
<dbReference type="InterPro" id="IPR036791">
    <property type="entry name" value="Ribosomal_bL9_C_sf"/>
</dbReference>
<dbReference type="InterPro" id="IPR020070">
    <property type="entry name" value="Ribosomal_bL9_N"/>
</dbReference>
<dbReference type="InterPro" id="IPR036935">
    <property type="entry name" value="Ribosomal_bL9_N_sf"/>
</dbReference>
<dbReference type="NCBIfam" id="TIGR00158">
    <property type="entry name" value="L9"/>
    <property type="match status" value="1"/>
</dbReference>
<dbReference type="PANTHER" id="PTHR21368">
    <property type="entry name" value="50S RIBOSOMAL PROTEIN L9"/>
    <property type="match status" value="1"/>
</dbReference>
<dbReference type="Pfam" id="PF03948">
    <property type="entry name" value="Ribosomal_L9_C"/>
    <property type="match status" value="1"/>
</dbReference>
<dbReference type="Pfam" id="PF01281">
    <property type="entry name" value="Ribosomal_L9_N"/>
    <property type="match status" value="1"/>
</dbReference>
<dbReference type="SUPFAM" id="SSF55658">
    <property type="entry name" value="L9 N-domain-like"/>
    <property type="match status" value="1"/>
</dbReference>
<dbReference type="SUPFAM" id="SSF55653">
    <property type="entry name" value="Ribosomal protein L9 C-domain"/>
    <property type="match status" value="1"/>
</dbReference>
<dbReference type="PROSITE" id="PS00651">
    <property type="entry name" value="RIBOSOMAL_L9"/>
    <property type="match status" value="1"/>
</dbReference>
<sequence>MKVLLLEDVKNLGKAGEVCEVKDGYGNNFLIANQKAKLATNEVINKYKAEVKKKAEKEALEKAQKLQMVETLQTITLTIHKKVGANGSLFGAITKEEITERLKEQHASLNLDKKDIELKHPIKSTGIYEIEVKLGSGVVGVFKIDVVAE</sequence>
<gene>
    <name evidence="1" type="primary">rplI</name>
    <name type="ordered locus">HP_0514</name>
</gene>
<keyword id="KW-1185">Reference proteome</keyword>
<keyword id="KW-0687">Ribonucleoprotein</keyword>
<keyword id="KW-0689">Ribosomal protein</keyword>
<keyword id="KW-0694">RNA-binding</keyword>
<keyword id="KW-0699">rRNA-binding</keyword>
<comment type="function">
    <text evidence="1">Binds to the 23S rRNA.</text>
</comment>
<comment type="similarity">
    <text evidence="1">Belongs to the bacterial ribosomal protein bL9 family.</text>
</comment>
<comment type="sequence caution" evidence="2">
    <conflict type="erroneous initiation">
        <sequence resource="EMBL-CDS" id="AAD07582"/>
    </conflict>
</comment>
<reference key="1">
    <citation type="journal article" date="1997" name="Nature">
        <title>The complete genome sequence of the gastric pathogen Helicobacter pylori.</title>
        <authorList>
            <person name="Tomb J.-F."/>
            <person name="White O."/>
            <person name="Kerlavage A.R."/>
            <person name="Clayton R.A."/>
            <person name="Sutton G.G."/>
            <person name="Fleischmann R.D."/>
            <person name="Ketchum K.A."/>
            <person name="Klenk H.-P."/>
            <person name="Gill S.R."/>
            <person name="Dougherty B.A."/>
            <person name="Nelson K.E."/>
            <person name="Quackenbush J."/>
            <person name="Zhou L."/>
            <person name="Kirkness E.F."/>
            <person name="Peterson S.N."/>
            <person name="Loftus B.J."/>
            <person name="Richardson D.L."/>
            <person name="Dodson R.J."/>
            <person name="Khalak H.G."/>
            <person name="Glodek A."/>
            <person name="McKenney K."/>
            <person name="FitzGerald L.M."/>
            <person name="Lee N."/>
            <person name="Adams M.D."/>
            <person name="Hickey E.K."/>
            <person name="Berg D.E."/>
            <person name="Gocayne J.D."/>
            <person name="Utterback T.R."/>
            <person name="Peterson J.D."/>
            <person name="Kelley J.M."/>
            <person name="Cotton M.D."/>
            <person name="Weidman J.F."/>
            <person name="Fujii C."/>
            <person name="Bowman C."/>
            <person name="Watthey L."/>
            <person name="Wallin E."/>
            <person name="Hayes W.S."/>
            <person name="Borodovsky M."/>
            <person name="Karp P.D."/>
            <person name="Smith H.O."/>
            <person name="Fraser C.M."/>
            <person name="Venter J.C."/>
        </authorList>
    </citation>
    <scope>NUCLEOTIDE SEQUENCE [LARGE SCALE GENOMIC DNA]</scope>
    <source>
        <strain>ATCC 700392 / 26695</strain>
    </source>
</reference>
<accession>P56035</accession>
<feature type="chain" id="PRO_0000176642" description="Large ribosomal subunit protein bL9">
    <location>
        <begin position="1"/>
        <end position="149"/>
    </location>
</feature>
<protein>
    <recommendedName>
        <fullName evidence="1">Large ribosomal subunit protein bL9</fullName>
    </recommendedName>
    <alternativeName>
        <fullName evidence="2">50S ribosomal protein L9</fullName>
    </alternativeName>
</protein>
<proteinExistence type="inferred from homology"/>
<organism>
    <name type="scientific">Helicobacter pylori (strain ATCC 700392 / 26695)</name>
    <name type="common">Campylobacter pylori</name>
    <dbReference type="NCBI Taxonomy" id="85962"/>
    <lineage>
        <taxon>Bacteria</taxon>
        <taxon>Pseudomonadati</taxon>
        <taxon>Campylobacterota</taxon>
        <taxon>Epsilonproteobacteria</taxon>
        <taxon>Campylobacterales</taxon>
        <taxon>Helicobacteraceae</taxon>
        <taxon>Helicobacter</taxon>
    </lineage>
</organism>
<name>RL9_HELPY</name>
<evidence type="ECO:0000255" key="1">
    <source>
        <dbReference type="HAMAP-Rule" id="MF_00503"/>
    </source>
</evidence>
<evidence type="ECO:0000305" key="2"/>